<reference key="1">
    <citation type="journal article" date="2011" name="Appl. Environ. Microbiol.">
        <title>Genomic potential of Marinobacter aquaeolei, a biogeochemical 'opportunitroph'.</title>
        <authorList>
            <person name="Singer E."/>
            <person name="Webb E.A."/>
            <person name="Nelson W.C."/>
            <person name="Heidelberg J.F."/>
            <person name="Ivanova N."/>
            <person name="Pati A."/>
            <person name="Edwards K.J."/>
        </authorList>
    </citation>
    <scope>NUCLEOTIDE SEQUENCE [LARGE SCALE GENOMIC DNA]</scope>
    <source>
        <strain>ATCC 700491 / DSM 11845 / VT8</strain>
    </source>
</reference>
<gene>
    <name evidence="1" type="primary">ruvB</name>
    <name type="ordered locus">Maqu_1704</name>
</gene>
<protein>
    <recommendedName>
        <fullName evidence="1">Holliday junction branch migration complex subunit RuvB</fullName>
        <ecNumber evidence="1">3.6.4.-</ecNumber>
    </recommendedName>
</protein>
<proteinExistence type="inferred from homology"/>
<comment type="function">
    <text evidence="1">The RuvA-RuvB-RuvC complex processes Holliday junction (HJ) DNA during genetic recombination and DNA repair, while the RuvA-RuvB complex plays an important role in the rescue of blocked DNA replication forks via replication fork reversal (RFR). RuvA specifically binds to HJ cruciform DNA, conferring on it an open structure. The RuvB hexamer acts as an ATP-dependent pump, pulling dsDNA into and through the RuvAB complex. RuvB forms 2 homohexamers on either side of HJ DNA bound by 1 or 2 RuvA tetramers; 4 subunits per hexamer contact DNA at a time. Coordinated motions by a converter formed by DNA-disengaged RuvB subunits stimulates ATP hydrolysis and nucleotide exchange. Immobilization of the converter enables RuvB to convert the ATP-contained energy into a lever motion, pulling 2 nucleotides of DNA out of the RuvA tetramer per ATP hydrolyzed, thus driving DNA branch migration. The RuvB motors rotate together with the DNA substrate, which together with the progressing nucleotide cycle form the mechanistic basis for DNA recombination by continuous HJ branch migration. Branch migration allows RuvC to scan DNA until it finds its consensus sequence, where it cleaves and resolves cruciform DNA.</text>
</comment>
<comment type="catalytic activity">
    <reaction evidence="1">
        <text>ATP + H2O = ADP + phosphate + H(+)</text>
        <dbReference type="Rhea" id="RHEA:13065"/>
        <dbReference type="ChEBI" id="CHEBI:15377"/>
        <dbReference type="ChEBI" id="CHEBI:15378"/>
        <dbReference type="ChEBI" id="CHEBI:30616"/>
        <dbReference type="ChEBI" id="CHEBI:43474"/>
        <dbReference type="ChEBI" id="CHEBI:456216"/>
    </reaction>
</comment>
<comment type="subunit">
    <text evidence="1">Homohexamer. Forms an RuvA(8)-RuvB(12)-Holliday junction (HJ) complex. HJ DNA is sandwiched between 2 RuvA tetramers; dsDNA enters through RuvA and exits via RuvB. An RuvB hexamer assembles on each DNA strand where it exits the tetramer. Each RuvB hexamer is contacted by two RuvA subunits (via domain III) on 2 adjacent RuvB subunits; this complex drives branch migration. In the full resolvosome a probable DNA-RuvA(4)-RuvB(12)-RuvC(2) complex forms which resolves the HJ.</text>
</comment>
<comment type="subcellular location">
    <subcellularLocation>
        <location evidence="1">Cytoplasm</location>
    </subcellularLocation>
</comment>
<comment type="domain">
    <text evidence="1">Has 3 domains, the large (RuvB-L) and small ATPase (RuvB-S) domains and the C-terminal head (RuvB-H) domain. The head domain binds DNA, while the ATPase domains jointly bind ATP, ADP or are empty depending on the state of the subunit in the translocation cycle. During a single DNA translocation step the structure of each domain remains the same, but their relative positions change.</text>
</comment>
<comment type="similarity">
    <text evidence="1">Belongs to the RuvB family.</text>
</comment>
<feature type="chain" id="PRO_1000001425" description="Holliday junction branch migration complex subunit RuvB">
    <location>
        <begin position="1"/>
        <end position="343"/>
    </location>
</feature>
<feature type="region of interest" description="Large ATPase domain (RuvB-L)" evidence="1">
    <location>
        <begin position="4"/>
        <end position="184"/>
    </location>
</feature>
<feature type="region of interest" description="Small ATPAse domain (RuvB-S)" evidence="1">
    <location>
        <begin position="185"/>
        <end position="255"/>
    </location>
</feature>
<feature type="region of interest" description="Head domain (RuvB-H)" evidence="1">
    <location>
        <begin position="258"/>
        <end position="343"/>
    </location>
</feature>
<feature type="binding site" evidence="1">
    <location>
        <position position="23"/>
    </location>
    <ligand>
        <name>ATP</name>
        <dbReference type="ChEBI" id="CHEBI:30616"/>
    </ligand>
</feature>
<feature type="binding site" evidence="1">
    <location>
        <position position="24"/>
    </location>
    <ligand>
        <name>ATP</name>
        <dbReference type="ChEBI" id="CHEBI:30616"/>
    </ligand>
</feature>
<feature type="binding site" evidence="1">
    <location>
        <position position="65"/>
    </location>
    <ligand>
        <name>ATP</name>
        <dbReference type="ChEBI" id="CHEBI:30616"/>
    </ligand>
</feature>
<feature type="binding site" evidence="1">
    <location>
        <position position="68"/>
    </location>
    <ligand>
        <name>ATP</name>
        <dbReference type="ChEBI" id="CHEBI:30616"/>
    </ligand>
</feature>
<feature type="binding site" evidence="1">
    <location>
        <position position="69"/>
    </location>
    <ligand>
        <name>ATP</name>
        <dbReference type="ChEBI" id="CHEBI:30616"/>
    </ligand>
</feature>
<feature type="binding site" evidence="1">
    <location>
        <position position="69"/>
    </location>
    <ligand>
        <name>Mg(2+)</name>
        <dbReference type="ChEBI" id="CHEBI:18420"/>
    </ligand>
</feature>
<feature type="binding site" evidence="1">
    <location>
        <position position="70"/>
    </location>
    <ligand>
        <name>ATP</name>
        <dbReference type="ChEBI" id="CHEBI:30616"/>
    </ligand>
</feature>
<feature type="binding site" evidence="1">
    <location>
        <begin position="131"/>
        <end position="133"/>
    </location>
    <ligand>
        <name>ATP</name>
        <dbReference type="ChEBI" id="CHEBI:30616"/>
    </ligand>
</feature>
<feature type="binding site" evidence="1">
    <location>
        <position position="174"/>
    </location>
    <ligand>
        <name>ATP</name>
        <dbReference type="ChEBI" id="CHEBI:30616"/>
    </ligand>
</feature>
<feature type="binding site" evidence="1">
    <location>
        <position position="184"/>
    </location>
    <ligand>
        <name>ATP</name>
        <dbReference type="ChEBI" id="CHEBI:30616"/>
    </ligand>
</feature>
<feature type="binding site" evidence="1">
    <location>
        <position position="221"/>
    </location>
    <ligand>
        <name>ATP</name>
        <dbReference type="ChEBI" id="CHEBI:30616"/>
    </ligand>
</feature>
<feature type="binding site" evidence="1">
    <location>
        <position position="294"/>
    </location>
    <ligand>
        <name>DNA</name>
        <dbReference type="ChEBI" id="CHEBI:16991"/>
    </ligand>
</feature>
<feature type="binding site" evidence="1">
    <location>
        <position position="313"/>
    </location>
    <ligand>
        <name>DNA</name>
        <dbReference type="ChEBI" id="CHEBI:16991"/>
    </ligand>
</feature>
<feature type="binding site" evidence="1">
    <location>
        <position position="318"/>
    </location>
    <ligand>
        <name>DNA</name>
        <dbReference type="ChEBI" id="CHEBI:16991"/>
    </ligand>
</feature>
<name>RUVB_MARN8</name>
<evidence type="ECO:0000255" key="1">
    <source>
        <dbReference type="HAMAP-Rule" id="MF_00016"/>
    </source>
</evidence>
<sequence length="343" mass="38007">MIESDRLISAKAGEYEEVHDRAIRPTLLSEYVGQPTVREQMEIFISAARGRQEALDHVLIFGPPGLGKTTLANIIANEMGVSIKTTSGPVLEKAGDLAAMLTNLEEGDVLFIDEIHRLSAAVEEVLYPAMEDYQLDIMIGEGPAARSIKLDLPPFTLVGATTRAGLLTSPLRDRFGIVQRLEFYNHQDLTHIITRSARLSSVEIDEAGAFEIARRSRGTPRIANRLLRRVRDFAEVRSNGHITADIADQALNMLKVDSQGFDHMDRRLLLAMIEKFDGGPVGVESLAAAISEERGTIEDVLEPFLIQQGYMVRTPRGRMVTSNAYQHFGVVPPRSGREDDLFE</sequence>
<organism>
    <name type="scientific">Marinobacter nauticus (strain ATCC 700491 / DSM 11845 / VT8)</name>
    <name type="common">Marinobacter aquaeolei</name>
    <dbReference type="NCBI Taxonomy" id="351348"/>
    <lineage>
        <taxon>Bacteria</taxon>
        <taxon>Pseudomonadati</taxon>
        <taxon>Pseudomonadota</taxon>
        <taxon>Gammaproteobacteria</taxon>
        <taxon>Pseudomonadales</taxon>
        <taxon>Marinobacteraceae</taxon>
        <taxon>Marinobacter</taxon>
    </lineage>
</organism>
<dbReference type="EC" id="3.6.4.-" evidence="1"/>
<dbReference type="EMBL" id="CP000514">
    <property type="protein sequence ID" value="ABM18788.1"/>
    <property type="molecule type" value="Genomic_DNA"/>
</dbReference>
<dbReference type="RefSeq" id="WP_011785187.1">
    <property type="nucleotide sequence ID" value="NC_008740.1"/>
</dbReference>
<dbReference type="SMR" id="A1U1B9"/>
<dbReference type="STRING" id="351348.Maqu_1704"/>
<dbReference type="GeneID" id="31821055"/>
<dbReference type="KEGG" id="maq:Maqu_1704"/>
<dbReference type="eggNOG" id="COG2255">
    <property type="taxonomic scope" value="Bacteria"/>
</dbReference>
<dbReference type="HOGENOM" id="CLU_055599_1_0_6"/>
<dbReference type="OrthoDB" id="9804478at2"/>
<dbReference type="Proteomes" id="UP000000998">
    <property type="component" value="Chromosome"/>
</dbReference>
<dbReference type="GO" id="GO:0005737">
    <property type="term" value="C:cytoplasm"/>
    <property type="evidence" value="ECO:0007669"/>
    <property type="project" value="UniProtKB-SubCell"/>
</dbReference>
<dbReference type="GO" id="GO:0048476">
    <property type="term" value="C:Holliday junction resolvase complex"/>
    <property type="evidence" value="ECO:0007669"/>
    <property type="project" value="UniProtKB-UniRule"/>
</dbReference>
<dbReference type="GO" id="GO:0005524">
    <property type="term" value="F:ATP binding"/>
    <property type="evidence" value="ECO:0007669"/>
    <property type="project" value="UniProtKB-UniRule"/>
</dbReference>
<dbReference type="GO" id="GO:0016887">
    <property type="term" value="F:ATP hydrolysis activity"/>
    <property type="evidence" value="ECO:0007669"/>
    <property type="project" value="InterPro"/>
</dbReference>
<dbReference type="GO" id="GO:0000400">
    <property type="term" value="F:four-way junction DNA binding"/>
    <property type="evidence" value="ECO:0007669"/>
    <property type="project" value="UniProtKB-UniRule"/>
</dbReference>
<dbReference type="GO" id="GO:0009378">
    <property type="term" value="F:four-way junction helicase activity"/>
    <property type="evidence" value="ECO:0007669"/>
    <property type="project" value="InterPro"/>
</dbReference>
<dbReference type="GO" id="GO:0006310">
    <property type="term" value="P:DNA recombination"/>
    <property type="evidence" value="ECO:0007669"/>
    <property type="project" value="UniProtKB-UniRule"/>
</dbReference>
<dbReference type="GO" id="GO:0006281">
    <property type="term" value="P:DNA repair"/>
    <property type="evidence" value="ECO:0007669"/>
    <property type="project" value="UniProtKB-UniRule"/>
</dbReference>
<dbReference type="CDD" id="cd00009">
    <property type="entry name" value="AAA"/>
    <property type="match status" value="1"/>
</dbReference>
<dbReference type="FunFam" id="1.10.10.10:FF:000086">
    <property type="entry name" value="Holliday junction ATP-dependent DNA helicase RuvB"/>
    <property type="match status" value="1"/>
</dbReference>
<dbReference type="FunFam" id="1.10.8.60:FF:000023">
    <property type="entry name" value="Holliday junction ATP-dependent DNA helicase RuvB"/>
    <property type="match status" value="1"/>
</dbReference>
<dbReference type="FunFam" id="3.40.50.300:FF:000073">
    <property type="entry name" value="Holliday junction ATP-dependent DNA helicase RuvB"/>
    <property type="match status" value="1"/>
</dbReference>
<dbReference type="Gene3D" id="1.10.8.60">
    <property type="match status" value="1"/>
</dbReference>
<dbReference type="Gene3D" id="3.40.50.300">
    <property type="entry name" value="P-loop containing nucleotide triphosphate hydrolases"/>
    <property type="match status" value="1"/>
</dbReference>
<dbReference type="Gene3D" id="1.10.10.10">
    <property type="entry name" value="Winged helix-like DNA-binding domain superfamily/Winged helix DNA-binding domain"/>
    <property type="match status" value="1"/>
</dbReference>
<dbReference type="HAMAP" id="MF_00016">
    <property type="entry name" value="DNA_HJ_migration_RuvB"/>
    <property type="match status" value="1"/>
</dbReference>
<dbReference type="InterPro" id="IPR003593">
    <property type="entry name" value="AAA+_ATPase"/>
</dbReference>
<dbReference type="InterPro" id="IPR041445">
    <property type="entry name" value="AAA_lid_4"/>
</dbReference>
<dbReference type="InterPro" id="IPR004605">
    <property type="entry name" value="DNA_helicase_Holl-junc_RuvB"/>
</dbReference>
<dbReference type="InterPro" id="IPR027417">
    <property type="entry name" value="P-loop_NTPase"/>
</dbReference>
<dbReference type="InterPro" id="IPR008824">
    <property type="entry name" value="RuvB-like_N"/>
</dbReference>
<dbReference type="InterPro" id="IPR008823">
    <property type="entry name" value="RuvB_C"/>
</dbReference>
<dbReference type="InterPro" id="IPR036388">
    <property type="entry name" value="WH-like_DNA-bd_sf"/>
</dbReference>
<dbReference type="InterPro" id="IPR036390">
    <property type="entry name" value="WH_DNA-bd_sf"/>
</dbReference>
<dbReference type="NCBIfam" id="NF000868">
    <property type="entry name" value="PRK00080.1"/>
    <property type="match status" value="1"/>
</dbReference>
<dbReference type="NCBIfam" id="TIGR00635">
    <property type="entry name" value="ruvB"/>
    <property type="match status" value="1"/>
</dbReference>
<dbReference type="PANTHER" id="PTHR42848">
    <property type="match status" value="1"/>
</dbReference>
<dbReference type="PANTHER" id="PTHR42848:SF1">
    <property type="entry name" value="HOLLIDAY JUNCTION BRANCH MIGRATION COMPLEX SUBUNIT RUVB"/>
    <property type="match status" value="1"/>
</dbReference>
<dbReference type="Pfam" id="PF17864">
    <property type="entry name" value="AAA_lid_4"/>
    <property type="match status" value="1"/>
</dbReference>
<dbReference type="Pfam" id="PF05491">
    <property type="entry name" value="RuvB_C"/>
    <property type="match status" value="1"/>
</dbReference>
<dbReference type="Pfam" id="PF05496">
    <property type="entry name" value="RuvB_N"/>
    <property type="match status" value="1"/>
</dbReference>
<dbReference type="SMART" id="SM00382">
    <property type="entry name" value="AAA"/>
    <property type="match status" value="1"/>
</dbReference>
<dbReference type="SUPFAM" id="SSF52540">
    <property type="entry name" value="P-loop containing nucleoside triphosphate hydrolases"/>
    <property type="match status" value="1"/>
</dbReference>
<dbReference type="SUPFAM" id="SSF46785">
    <property type="entry name" value="Winged helix' DNA-binding domain"/>
    <property type="match status" value="1"/>
</dbReference>
<keyword id="KW-0067">ATP-binding</keyword>
<keyword id="KW-0963">Cytoplasm</keyword>
<keyword id="KW-0227">DNA damage</keyword>
<keyword id="KW-0233">DNA recombination</keyword>
<keyword id="KW-0234">DNA repair</keyword>
<keyword id="KW-0238">DNA-binding</keyword>
<keyword id="KW-0378">Hydrolase</keyword>
<keyword id="KW-0547">Nucleotide-binding</keyword>
<accession>A1U1B9</accession>